<proteinExistence type="evidence at transcript level"/>
<protein>
    <recommendedName>
        <fullName>F-box protein At2g17690</fullName>
    </recommendedName>
    <alternativeName>
        <fullName evidence="3">Protein SUPPRESSOR OF DRM1 DRM2 CMT3</fullName>
    </alternativeName>
</protein>
<feature type="chain" id="PRO_0000283382" description="F-box protein At2g17690">
    <location>
        <begin position="1"/>
        <end position="421"/>
    </location>
</feature>
<feature type="domain" description="F-box">
    <location>
        <begin position="2"/>
        <end position="50"/>
    </location>
</feature>
<name>FB111_ARATH</name>
<accession>Q3EBY8</accession>
<comment type="function">
    <text evidence="1">Involved in heat stress response. Contributes to recovery from heat stress.</text>
</comment>
<comment type="induction">
    <text evidence="1">By heat stress.</text>
</comment>
<keyword id="KW-1185">Reference proteome</keyword>
<keyword id="KW-0346">Stress response</keyword>
<dbReference type="EMBL" id="CP002685">
    <property type="protein sequence ID" value="AEC06666.1"/>
    <property type="molecule type" value="Genomic_DNA"/>
</dbReference>
<dbReference type="EMBL" id="DQ069841">
    <property type="status" value="NOT_ANNOTATED_CDS"/>
    <property type="molecule type" value="mRNA"/>
</dbReference>
<dbReference type="RefSeq" id="NP_179360.1">
    <property type="nucleotide sequence ID" value="NM_127323.3"/>
</dbReference>
<dbReference type="BioGRID" id="1633">
    <property type="interactions" value="2"/>
</dbReference>
<dbReference type="STRING" id="3702.Q3EBY8"/>
<dbReference type="PaxDb" id="3702-AT2G17690.1"/>
<dbReference type="EnsemblPlants" id="AT2G17690.1">
    <property type="protein sequence ID" value="AT2G17690.1"/>
    <property type="gene ID" value="AT2G17690"/>
</dbReference>
<dbReference type="GeneID" id="816276"/>
<dbReference type="Gramene" id="AT2G17690.1">
    <property type="protein sequence ID" value="AT2G17690.1"/>
    <property type="gene ID" value="AT2G17690"/>
</dbReference>
<dbReference type="KEGG" id="ath:AT2G17690"/>
<dbReference type="Araport" id="AT2G17690"/>
<dbReference type="TAIR" id="AT2G17690">
    <property type="gene designation" value="SDC"/>
</dbReference>
<dbReference type="eggNOG" id="ENOG502RY64">
    <property type="taxonomic scope" value="Eukaryota"/>
</dbReference>
<dbReference type="HOGENOM" id="CLU_019286_1_0_1"/>
<dbReference type="InParanoid" id="Q3EBY8"/>
<dbReference type="OMA" id="HENITNG"/>
<dbReference type="PhylomeDB" id="Q3EBY8"/>
<dbReference type="PRO" id="PR:Q3EBY8"/>
<dbReference type="Proteomes" id="UP000006548">
    <property type="component" value="Chromosome 2"/>
</dbReference>
<dbReference type="ExpressionAtlas" id="Q3EBY8">
    <property type="expression patterns" value="baseline and differential"/>
</dbReference>
<dbReference type="GO" id="GO:0009408">
    <property type="term" value="P:response to heat"/>
    <property type="evidence" value="ECO:0000314"/>
    <property type="project" value="UniProtKB"/>
</dbReference>
<dbReference type="Gene3D" id="1.20.1280.50">
    <property type="match status" value="1"/>
</dbReference>
<dbReference type="InterPro" id="IPR036047">
    <property type="entry name" value="F-box-like_dom_sf"/>
</dbReference>
<dbReference type="InterPro" id="IPR001810">
    <property type="entry name" value="F-box_dom"/>
</dbReference>
<dbReference type="InterPro" id="IPR005174">
    <property type="entry name" value="KIB1-4_b-propeller"/>
</dbReference>
<dbReference type="InterPro" id="IPR051304">
    <property type="entry name" value="SCF_F-box_domain"/>
</dbReference>
<dbReference type="PANTHER" id="PTHR47123:SF25">
    <property type="entry name" value="F-BOX PROTEIN"/>
    <property type="match status" value="1"/>
</dbReference>
<dbReference type="PANTHER" id="PTHR47123">
    <property type="entry name" value="F-BOX PROTEIN SKIP23"/>
    <property type="match status" value="1"/>
</dbReference>
<dbReference type="Pfam" id="PF03478">
    <property type="entry name" value="Beta-prop_KIB1-4"/>
    <property type="match status" value="1"/>
</dbReference>
<dbReference type="Pfam" id="PF00646">
    <property type="entry name" value="F-box"/>
    <property type="match status" value="1"/>
</dbReference>
<dbReference type="SUPFAM" id="SSF81383">
    <property type="entry name" value="F-box domain"/>
    <property type="match status" value="1"/>
</dbReference>
<sequence>MGDWSKLPEELLGLIALRLYSVIELIRFRSICKSWRSSASGVNKNHSLSSPLIYFKPLQIILARAQANGQILSKYHGTVLSRATFFRVTLASSPDQGWLIKSDTDLKYRNFHLLNCLSRKALGRSRKLISLSEFIVSEIQESYAVVGRRTRETASEFKRVFLVRVQGGDHRVLVIGIDGKIRFWKGGIWNGIKKQVAQFSDFVLDEGLTYAVDTKGIMWWISSAYDIIRYGTKLHENITNGSCGEKRFVRCRGELYIVDRLIDENLLKRKADSYDDNAIVHFRNADYTNADLWEDGNGNDDFFAAQAHRFIHVLHDNLGNVSCKPFERDPPKTIGFKVYKNDEELLKWVEVKSLGDKAIVIATDACFSVSAHEFYGCLPNSIYFTDKKEEEVKVFKLDDGSITTMSESEQSCFQMFVPSFL</sequence>
<organism>
    <name type="scientific">Arabidopsis thaliana</name>
    <name type="common">Mouse-ear cress</name>
    <dbReference type="NCBI Taxonomy" id="3702"/>
    <lineage>
        <taxon>Eukaryota</taxon>
        <taxon>Viridiplantae</taxon>
        <taxon>Streptophyta</taxon>
        <taxon>Embryophyta</taxon>
        <taxon>Tracheophyta</taxon>
        <taxon>Spermatophyta</taxon>
        <taxon>Magnoliopsida</taxon>
        <taxon>eudicotyledons</taxon>
        <taxon>Gunneridae</taxon>
        <taxon>Pentapetalae</taxon>
        <taxon>rosids</taxon>
        <taxon>malvids</taxon>
        <taxon>Brassicales</taxon>
        <taxon>Brassicaceae</taxon>
        <taxon>Camelineae</taxon>
        <taxon>Arabidopsis</taxon>
    </lineage>
</organism>
<reference key="1">
    <citation type="journal article" date="1999" name="Nature">
        <title>Sequence and analysis of chromosome 2 of the plant Arabidopsis thaliana.</title>
        <authorList>
            <person name="Lin X."/>
            <person name="Kaul S."/>
            <person name="Rounsley S.D."/>
            <person name="Shea T.P."/>
            <person name="Benito M.-I."/>
            <person name="Town C.D."/>
            <person name="Fujii C.Y."/>
            <person name="Mason T.M."/>
            <person name="Bowman C.L."/>
            <person name="Barnstead M.E."/>
            <person name="Feldblyum T.V."/>
            <person name="Buell C.R."/>
            <person name="Ketchum K.A."/>
            <person name="Lee J.J."/>
            <person name="Ronning C.M."/>
            <person name="Koo H.L."/>
            <person name="Moffat K.S."/>
            <person name="Cronin L.A."/>
            <person name="Shen M."/>
            <person name="Pai G."/>
            <person name="Van Aken S."/>
            <person name="Umayam L."/>
            <person name="Tallon L.J."/>
            <person name="Gill J.E."/>
            <person name="Adams M.D."/>
            <person name="Carrera A.J."/>
            <person name="Creasy T.H."/>
            <person name="Goodman H.M."/>
            <person name="Somerville C.R."/>
            <person name="Copenhaver G.P."/>
            <person name="Preuss D."/>
            <person name="Nierman W.C."/>
            <person name="White O."/>
            <person name="Eisen J.A."/>
            <person name="Salzberg S.L."/>
            <person name="Fraser C.M."/>
            <person name="Venter J.C."/>
        </authorList>
    </citation>
    <scope>NUCLEOTIDE SEQUENCE [LARGE SCALE GENOMIC DNA]</scope>
    <source>
        <strain>cv. Columbia</strain>
    </source>
</reference>
<reference key="2">
    <citation type="journal article" date="2017" name="Plant J.">
        <title>Araport11: a complete reannotation of the Arabidopsis thaliana reference genome.</title>
        <authorList>
            <person name="Cheng C.Y."/>
            <person name="Krishnakumar V."/>
            <person name="Chan A.P."/>
            <person name="Thibaud-Nissen F."/>
            <person name="Schobel S."/>
            <person name="Town C.D."/>
        </authorList>
    </citation>
    <scope>GENOME REANNOTATION</scope>
    <source>
        <strain>cv. Columbia</strain>
    </source>
</reference>
<reference key="3">
    <citation type="journal article" date="2005" name="Plant Physiol.">
        <title>Analysis of the cDNAs of hypothetical genes on Arabidopsis chromosome 2 reveals numerous transcript variants.</title>
        <authorList>
            <person name="Xiao Y.-L."/>
            <person name="Smith S.R."/>
            <person name="Ishmael N."/>
            <person name="Redman J.C."/>
            <person name="Kumar N."/>
            <person name="Monaghan E.L."/>
            <person name="Ayele M."/>
            <person name="Haas B.J."/>
            <person name="Wu H.C."/>
            <person name="Town C.D."/>
        </authorList>
    </citation>
    <scope>NUCLEOTIDE SEQUENCE [LARGE SCALE MRNA] OF 1-302</scope>
    <source>
        <strain>cv. Columbia</strain>
    </source>
</reference>
<reference key="4">
    <citation type="journal article" date="2014" name="PLoS Genet.">
        <title>Heat-induced release of epigenetic silencing reveals the concealed role of an imprinted plant gene.</title>
        <authorList>
            <person name="Sanchez D.H."/>
            <person name="Paszkowski J."/>
        </authorList>
    </citation>
    <scope>FUNCTION</scope>
    <scope>INDUCTION BY HEAT STRESS</scope>
</reference>
<gene>
    <name evidence="2" type="primary">SDC</name>
    <name type="ordered locus">At2g17690</name>
    <name type="ORF">T17A5.18</name>
</gene>
<evidence type="ECO:0000269" key="1">
    <source>
    </source>
</evidence>
<evidence type="ECO:0000303" key="2">
    <source>
    </source>
</evidence>
<evidence type="ECO:0000305" key="3"/>